<gene>
    <name type="primary">HSP81-3</name>
    <name evidence="8" type="ordered locus">Os09g0482400</name>
    <name evidence="7" type="ORF">P0463D04.35</name>
</gene>
<gene>
    <name evidence="9" type="ordered locus">Os09g0482600</name>
    <name evidence="6" type="ordered locus">LOC_Os09g30418</name>
</gene>
<dbReference type="EMBL" id="AP005392">
    <property type="protein sequence ID" value="BAD33409.1"/>
    <property type="molecule type" value="Genomic_DNA"/>
</dbReference>
<dbReference type="EMBL" id="AP014965">
    <property type="protein sequence ID" value="BAT08654.1"/>
    <property type="molecule type" value="Genomic_DNA"/>
</dbReference>
<dbReference type="EMBL" id="AP014965">
    <property type="protein sequence ID" value="BAT08658.1"/>
    <property type="molecule type" value="Genomic_DNA"/>
</dbReference>
<dbReference type="EMBL" id="D11138">
    <property type="protein sequence ID" value="BAA01912.1"/>
    <property type="status" value="ALT_SEQ"/>
    <property type="molecule type" value="mRNA"/>
</dbReference>
<dbReference type="EMBL" id="S56878">
    <property type="protein sequence ID" value="CAB31515.1"/>
    <property type="status" value="ALT_SEQ"/>
    <property type="molecule type" value="mRNA"/>
</dbReference>
<dbReference type="PIR" id="T04311">
    <property type="entry name" value="T04311"/>
</dbReference>
<dbReference type="RefSeq" id="XP_015611111.1">
    <property type="nucleotide sequence ID" value="XM_015755625.1"/>
</dbReference>
<dbReference type="RefSeq" id="XP_015611112.1">
    <property type="nucleotide sequence ID" value="XM_015755626.1"/>
</dbReference>
<dbReference type="PDB" id="4X9L">
    <property type="method" value="X-ray"/>
    <property type="resolution" value="3.10 A"/>
    <property type="chains" value="A=1-216"/>
</dbReference>
<dbReference type="PDBsum" id="4X9L"/>
<dbReference type="SMR" id="Q07078"/>
<dbReference type="FunCoup" id="Q07078">
    <property type="interactions" value="2491"/>
</dbReference>
<dbReference type="STRING" id="39947.Q07078"/>
<dbReference type="iPTMnet" id="Q07078"/>
<dbReference type="PaxDb" id="39947-Q07078"/>
<dbReference type="EnsemblPlants" id="Os09t0482400-01">
    <property type="protein sequence ID" value="Os09t0482400-01"/>
    <property type="gene ID" value="Os09g0482400"/>
</dbReference>
<dbReference type="EnsemblPlants" id="Os09t0482600-01">
    <property type="protein sequence ID" value="Os09t0482600-01"/>
    <property type="gene ID" value="Os09g0482600"/>
</dbReference>
<dbReference type="Gramene" id="Os09t0482400-01">
    <property type="protein sequence ID" value="Os09t0482400-01"/>
    <property type="gene ID" value="Os09g0482400"/>
</dbReference>
<dbReference type="Gramene" id="Os09t0482600-01">
    <property type="protein sequence ID" value="Os09t0482600-01"/>
    <property type="gene ID" value="Os09g0482600"/>
</dbReference>
<dbReference type="KEGG" id="osa:9267802"/>
<dbReference type="eggNOG" id="KOG0019">
    <property type="taxonomic scope" value="Eukaryota"/>
</dbReference>
<dbReference type="HOGENOM" id="CLU_006684_1_3_1"/>
<dbReference type="InParanoid" id="Q07078"/>
<dbReference type="OMA" id="CHENVIY"/>
<dbReference type="OrthoDB" id="988614at2759"/>
<dbReference type="EvolutionaryTrace" id="Q07078"/>
<dbReference type="Proteomes" id="UP000000763">
    <property type="component" value="Chromosome 9"/>
</dbReference>
<dbReference type="Proteomes" id="UP000059680">
    <property type="component" value="Chromosome 9"/>
</dbReference>
<dbReference type="ExpressionAtlas" id="Q07078">
    <property type="expression patterns" value="baseline and differential"/>
</dbReference>
<dbReference type="GO" id="GO:0005829">
    <property type="term" value="C:cytosol"/>
    <property type="evidence" value="ECO:0000318"/>
    <property type="project" value="GO_Central"/>
</dbReference>
<dbReference type="GO" id="GO:0048471">
    <property type="term" value="C:perinuclear region of cytoplasm"/>
    <property type="evidence" value="ECO:0000318"/>
    <property type="project" value="GO_Central"/>
</dbReference>
<dbReference type="GO" id="GO:0005886">
    <property type="term" value="C:plasma membrane"/>
    <property type="evidence" value="ECO:0000318"/>
    <property type="project" value="GO_Central"/>
</dbReference>
<dbReference type="GO" id="GO:0032991">
    <property type="term" value="C:protein-containing complex"/>
    <property type="evidence" value="ECO:0000318"/>
    <property type="project" value="GO_Central"/>
</dbReference>
<dbReference type="GO" id="GO:0005524">
    <property type="term" value="F:ATP binding"/>
    <property type="evidence" value="ECO:0000318"/>
    <property type="project" value="GO_Central"/>
</dbReference>
<dbReference type="GO" id="GO:0016887">
    <property type="term" value="F:ATP hydrolysis activity"/>
    <property type="evidence" value="ECO:0000318"/>
    <property type="project" value="GO_Central"/>
</dbReference>
<dbReference type="GO" id="GO:0140662">
    <property type="term" value="F:ATP-dependent protein folding chaperone"/>
    <property type="evidence" value="ECO:0007669"/>
    <property type="project" value="InterPro"/>
</dbReference>
<dbReference type="GO" id="GO:0051082">
    <property type="term" value="F:unfolded protein binding"/>
    <property type="evidence" value="ECO:0000318"/>
    <property type="project" value="GO_Central"/>
</dbReference>
<dbReference type="GO" id="GO:0034605">
    <property type="term" value="P:cellular response to heat"/>
    <property type="evidence" value="ECO:0000318"/>
    <property type="project" value="GO_Central"/>
</dbReference>
<dbReference type="GO" id="GO:0006457">
    <property type="term" value="P:protein folding"/>
    <property type="evidence" value="ECO:0000318"/>
    <property type="project" value="GO_Central"/>
</dbReference>
<dbReference type="GO" id="GO:0050821">
    <property type="term" value="P:protein stabilization"/>
    <property type="evidence" value="ECO:0000318"/>
    <property type="project" value="GO_Central"/>
</dbReference>
<dbReference type="CDD" id="cd16927">
    <property type="entry name" value="HATPase_Hsp90-like"/>
    <property type="match status" value="1"/>
</dbReference>
<dbReference type="FunFam" id="3.30.565.10:FF:000012">
    <property type="entry name" value="Heat shock cognate protein"/>
    <property type="match status" value="1"/>
</dbReference>
<dbReference type="FunFam" id="1.20.120.790:FF:000001">
    <property type="entry name" value="Heat shock protein 90 alpha"/>
    <property type="match status" value="1"/>
</dbReference>
<dbReference type="FunFam" id="3.30.230.80:FF:000001">
    <property type="entry name" value="Heat shock protein 90 alpha"/>
    <property type="match status" value="1"/>
</dbReference>
<dbReference type="FunFam" id="3.40.50.11260:FF:000001">
    <property type="entry name" value="Heat shock protein 90 alpha"/>
    <property type="match status" value="1"/>
</dbReference>
<dbReference type="Gene3D" id="3.30.230.80">
    <property type="match status" value="1"/>
</dbReference>
<dbReference type="Gene3D" id="3.40.50.11260">
    <property type="match status" value="1"/>
</dbReference>
<dbReference type="Gene3D" id="1.20.120.790">
    <property type="entry name" value="Heat shock protein 90, C-terminal domain"/>
    <property type="match status" value="1"/>
</dbReference>
<dbReference type="Gene3D" id="3.30.565.10">
    <property type="entry name" value="Histidine kinase-like ATPase, C-terminal domain"/>
    <property type="match status" value="1"/>
</dbReference>
<dbReference type="HAMAP" id="MF_00505">
    <property type="entry name" value="HSP90"/>
    <property type="match status" value="1"/>
</dbReference>
<dbReference type="InterPro" id="IPR036890">
    <property type="entry name" value="HATPase_C_sf"/>
</dbReference>
<dbReference type="InterPro" id="IPR019805">
    <property type="entry name" value="Heat_shock_protein_90_CS"/>
</dbReference>
<dbReference type="InterPro" id="IPR037196">
    <property type="entry name" value="HSP90_C"/>
</dbReference>
<dbReference type="InterPro" id="IPR001404">
    <property type="entry name" value="Hsp90_fam"/>
</dbReference>
<dbReference type="InterPro" id="IPR020575">
    <property type="entry name" value="Hsp90_N"/>
</dbReference>
<dbReference type="InterPro" id="IPR020568">
    <property type="entry name" value="Ribosomal_Su5_D2-typ_SF"/>
</dbReference>
<dbReference type="NCBIfam" id="NF003555">
    <property type="entry name" value="PRK05218.1"/>
    <property type="match status" value="1"/>
</dbReference>
<dbReference type="PANTHER" id="PTHR11528">
    <property type="entry name" value="HEAT SHOCK PROTEIN 90 FAMILY MEMBER"/>
    <property type="match status" value="1"/>
</dbReference>
<dbReference type="Pfam" id="PF13589">
    <property type="entry name" value="HATPase_c_3"/>
    <property type="match status" value="1"/>
</dbReference>
<dbReference type="Pfam" id="PF00183">
    <property type="entry name" value="HSP90"/>
    <property type="match status" value="1"/>
</dbReference>
<dbReference type="PIRSF" id="PIRSF002583">
    <property type="entry name" value="Hsp90"/>
    <property type="match status" value="1"/>
</dbReference>
<dbReference type="PRINTS" id="PR00775">
    <property type="entry name" value="HEATSHOCK90"/>
</dbReference>
<dbReference type="SMART" id="SM00387">
    <property type="entry name" value="HATPase_c"/>
    <property type="match status" value="1"/>
</dbReference>
<dbReference type="SUPFAM" id="SSF55874">
    <property type="entry name" value="ATPase domain of HSP90 chaperone/DNA topoisomerase II/histidine kinase"/>
    <property type="match status" value="1"/>
</dbReference>
<dbReference type="SUPFAM" id="SSF110942">
    <property type="entry name" value="HSP90 C-terminal domain"/>
    <property type="match status" value="1"/>
</dbReference>
<dbReference type="SUPFAM" id="SSF54211">
    <property type="entry name" value="Ribosomal protein S5 domain 2-like"/>
    <property type="match status" value="1"/>
</dbReference>
<dbReference type="PROSITE" id="PS00298">
    <property type="entry name" value="HSP90"/>
    <property type="match status" value="1"/>
</dbReference>
<keyword id="KW-0002">3D-structure</keyword>
<keyword id="KW-0067">ATP-binding</keyword>
<keyword id="KW-0143">Chaperone</keyword>
<keyword id="KW-0963">Cytoplasm</keyword>
<keyword id="KW-0547">Nucleotide-binding</keyword>
<keyword id="KW-1185">Reference proteome</keyword>
<keyword id="KW-0346">Stress response</keyword>
<evidence type="ECO:0000250" key="1">
    <source>
        <dbReference type="UniProtKB" id="P02829"/>
    </source>
</evidence>
<evidence type="ECO:0000250" key="2">
    <source>
        <dbReference type="UniProtKB" id="P07900"/>
    </source>
</evidence>
<evidence type="ECO:0000256" key="3">
    <source>
        <dbReference type="SAM" id="MobiDB-lite"/>
    </source>
</evidence>
<evidence type="ECO:0000269" key="4">
    <source>
    </source>
</evidence>
<evidence type="ECO:0000303" key="5">
    <source>
    </source>
</evidence>
<evidence type="ECO:0000305" key="6"/>
<evidence type="ECO:0000312" key="7">
    <source>
        <dbReference type="EMBL" id="BAD33409.1"/>
    </source>
</evidence>
<evidence type="ECO:0000312" key="8">
    <source>
        <dbReference type="EMBL" id="BAT08654.1"/>
    </source>
</evidence>
<evidence type="ECO:0000312" key="9">
    <source>
        <dbReference type="EMBL" id="BAT08658.1"/>
    </source>
</evidence>
<evidence type="ECO:0007829" key="10">
    <source>
        <dbReference type="PDB" id="4X9L"/>
    </source>
</evidence>
<feature type="chain" id="PRO_0000062955" description="Heat shock protein 81-3">
    <location>
        <begin position="1"/>
        <end position="699"/>
    </location>
</feature>
<feature type="region of interest" description="Disordered" evidence="3">
    <location>
        <begin position="215"/>
        <end position="250"/>
    </location>
</feature>
<feature type="region of interest" description="Disordered" evidence="3">
    <location>
        <begin position="674"/>
        <end position="699"/>
    </location>
</feature>
<feature type="short sequence motif" description="TPR repeat-binding">
    <location>
        <begin position="695"/>
        <end position="699"/>
    </location>
</feature>
<feature type="compositionally biased region" description="Basic and acidic residues" evidence="3">
    <location>
        <begin position="228"/>
        <end position="237"/>
    </location>
</feature>
<feature type="compositionally biased region" description="Acidic residues" evidence="3">
    <location>
        <begin position="674"/>
        <end position="690"/>
    </location>
</feature>
<feature type="binding site" evidence="1">
    <location>
        <position position="35"/>
    </location>
    <ligand>
        <name>ATP</name>
        <dbReference type="ChEBI" id="CHEBI:30616"/>
    </ligand>
</feature>
<feature type="binding site" evidence="2">
    <location>
        <position position="39"/>
    </location>
    <ligand>
        <name>ATP</name>
        <dbReference type="ChEBI" id="CHEBI:30616"/>
    </ligand>
</feature>
<feature type="binding site" evidence="2">
    <location>
        <position position="81"/>
    </location>
    <ligand>
        <name>ATP</name>
        <dbReference type="ChEBI" id="CHEBI:30616"/>
    </ligand>
</feature>
<feature type="binding site" evidence="1">
    <location>
        <position position="86"/>
    </location>
    <ligand>
        <name>ATP</name>
        <dbReference type="ChEBI" id="CHEBI:30616"/>
    </ligand>
</feature>
<feature type="binding site" evidence="1">
    <location>
        <position position="94"/>
    </location>
    <ligand>
        <name>ATP</name>
        <dbReference type="ChEBI" id="CHEBI:30616"/>
    </ligand>
</feature>
<feature type="binding site" evidence="1">
    <location>
        <begin position="101"/>
        <end position="102"/>
    </location>
    <ligand>
        <name>ATP</name>
        <dbReference type="ChEBI" id="CHEBI:30616"/>
    </ligand>
</feature>
<feature type="binding site" evidence="1">
    <location>
        <begin position="121"/>
        <end position="126"/>
    </location>
    <ligand>
        <name>ATP</name>
        <dbReference type="ChEBI" id="CHEBI:30616"/>
    </ligand>
</feature>
<feature type="binding site" evidence="2">
    <location>
        <position position="126"/>
    </location>
    <ligand>
        <name>ATP</name>
        <dbReference type="ChEBI" id="CHEBI:30616"/>
    </ligand>
</feature>
<feature type="binding site" evidence="1">
    <location>
        <position position="173"/>
    </location>
    <ligand>
        <name>ATP</name>
        <dbReference type="ChEBI" id="CHEBI:30616"/>
    </ligand>
</feature>
<feature type="binding site" evidence="1">
    <location>
        <position position="373"/>
    </location>
    <ligand>
        <name>ATP</name>
        <dbReference type="ChEBI" id="CHEBI:30616"/>
    </ligand>
</feature>
<feature type="strand" evidence="10">
    <location>
        <begin position="5"/>
        <end position="9"/>
    </location>
</feature>
<feature type="helix" evidence="10">
    <location>
        <begin position="12"/>
        <end position="22"/>
    </location>
</feature>
<feature type="helix" evidence="10">
    <location>
        <begin position="31"/>
        <end position="53"/>
    </location>
</feature>
<feature type="turn" evidence="10">
    <location>
        <begin position="55"/>
        <end position="59"/>
    </location>
</feature>
<feature type="strand" evidence="10">
    <location>
        <begin position="66"/>
        <end position="71"/>
    </location>
</feature>
<feature type="turn" evidence="10">
    <location>
        <begin position="72"/>
        <end position="75"/>
    </location>
</feature>
<feature type="strand" evidence="10">
    <location>
        <begin position="76"/>
        <end position="81"/>
    </location>
</feature>
<feature type="helix" evidence="10">
    <location>
        <begin position="88"/>
        <end position="94"/>
    </location>
</feature>
<feature type="helix" evidence="10">
    <location>
        <begin position="105"/>
        <end position="108"/>
    </location>
</feature>
<feature type="helix" evidence="10">
    <location>
        <begin position="126"/>
        <end position="131"/>
    </location>
</feature>
<feature type="strand" evidence="10">
    <location>
        <begin position="133"/>
        <end position="141"/>
    </location>
</feature>
<feature type="strand" evidence="10">
    <location>
        <begin position="143"/>
        <end position="145"/>
    </location>
</feature>
<feature type="strand" evidence="10">
    <location>
        <begin position="147"/>
        <end position="152"/>
    </location>
</feature>
<feature type="strand" evidence="10">
    <location>
        <begin position="154"/>
        <end position="162"/>
    </location>
</feature>
<feature type="strand" evidence="10">
    <location>
        <begin position="170"/>
        <end position="179"/>
    </location>
</feature>
<feature type="helix" evidence="10">
    <location>
        <begin position="184"/>
        <end position="187"/>
    </location>
</feature>
<feature type="helix" evidence="10">
    <location>
        <begin position="189"/>
        <end position="197"/>
    </location>
</feature>
<feature type="strand" evidence="10">
    <location>
        <begin position="202"/>
        <end position="205"/>
    </location>
</feature>
<feature type="strand" evidence="10">
    <location>
        <begin position="207"/>
        <end position="209"/>
    </location>
</feature>
<comment type="function">
    <text evidence="2">Molecular chaperone that promotes the maturation, structural maintenance and proper regulation of specific target proteins involved for instance in cell cycle control and signal transduction. Undergoes a functional cycle that is linked to its ATPase activity. This cycle probably induces conformational changes in the client proteins, thereby causing their activation. Interacts dynamically with various co-chaperones that modulate its substrate recognition, ATPase cycle and chaperone function.</text>
</comment>
<comment type="subunit">
    <text evidence="2">Homodimer.</text>
</comment>
<comment type="subcellular location">
    <subcellularLocation>
        <location evidence="1">Cytoplasm</location>
    </subcellularLocation>
</comment>
<comment type="tissue specificity">
    <text evidence="4">Expressed in callus.</text>
</comment>
<comment type="induction">
    <text evidence="4">By gravity stress.</text>
</comment>
<comment type="domain">
    <text evidence="1">The TPR repeat-binding motif mediates interaction with TPR repeat-containing proteins.</text>
</comment>
<comment type="similarity">
    <text evidence="6">Belongs to the heat shock protein 90 family.</text>
</comment>
<comment type="sequence caution" evidence="6">
    <conflict type="frameshift">
        <sequence resource="EMBL-CDS" id="BAA01912"/>
    </conflict>
</comment>
<comment type="sequence caution" evidence="6">
    <conflict type="miscellaneous discrepancy">
        <sequence resource="EMBL-CDS" id="BAA01912"/>
    </conflict>
    <text>Sequencing errors.</text>
</comment>
<comment type="sequence caution" evidence="6">
    <conflict type="frameshift">
        <sequence resource="EMBL-CDS" id="CAB31515"/>
    </conflict>
</comment>
<comment type="sequence caution" evidence="6">
    <conflict type="miscellaneous discrepancy">
        <sequence resource="EMBL-CDS" id="CAB31515"/>
    </conflict>
    <text>Sequencing errors.</text>
</comment>
<protein>
    <recommendedName>
        <fullName>Heat shock protein 81-3</fullName>
        <shortName>HSP81-3</shortName>
    </recommendedName>
    <alternativeName>
        <fullName evidence="5">Gravity-specific protein GSC 381</fullName>
    </alternativeName>
</protein>
<organism>
    <name type="scientific">Oryza sativa subsp. japonica</name>
    <name type="common">Rice</name>
    <dbReference type="NCBI Taxonomy" id="39947"/>
    <lineage>
        <taxon>Eukaryota</taxon>
        <taxon>Viridiplantae</taxon>
        <taxon>Streptophyta</taxon>
        <taxon>Embryophyta</taxon>
        <taxon>Tracheophyta</taxon>
        <taxon>Spermatophyta</taxon>
        <taxon>Magnoliopsida</taxon>
        <taxon>Liliopsida</taxon>
        <taxon>Poales</taxon>
        <taxon>Poaceae</taxon>
        <taxon>BOP clade</taxon>
        <taxon>Oryzoideae</taxon>
        <taxon>Oryzeae</taxon>
        <taxon>Oryzinae</taxon>
        <taxon>Oryza</taxon>
        <taxon>Oryza sativa</taxon>
    </lineage>
</organism>
<name>HSP83_ORYSJ</name>
<sequence>MASETETFAFQAEINQLLSLIINTFYSNKEIFLRELISNSSDALDKIRFESLTDKSKLDAQPELFIHIVPDKASNTLSIIDSGVGMTKSDLVNNLGTIARSGTKEFMEALAAGADVSMIGQFGVGFYSAYLVAERVVVTTKHNDDEQYVWESQAGGSFTVTRDTSGEQLGRGTKITLYLKDDQLEYLEERRLKDLVKKHSEFISYPISLWTEKTTEKEISDDEDEEEKKDAEEGKVEDVDEEKEEKEKKKKKIKEVSHEWNVMNKQKPIWLRKPEEITKEEYAAFYKSLTNDWEEHLAVKHFSVEGQLEFKAILFVPKRAPFDLFDTRKKQNNIKLYVRRVFIMDNCEELIPEWLSFVKGIVDSEDLPLNISREMLQQNKILKVIRKNLVKKCVELFFEIAENKEDYNKFYEAFSKNLKLGIHEDSTNRTKIAELLRYHSTKSGDELTSLKDYVTRMKEGQSEIYYITGESKKAVENSPFLEKLKKKGYEVLYMVDAIDEYAVGQLKEFEGKKLVSATKEGLKLDESEDEKKRQEELKEKFEGLCKVIKEVLGDKVEKVVVSDRVVDSPCCLVTGEYGWTANMERIMKAQALRDSSMAGYMSSKKTMEINPENAIMDELRKRADADKNDKSVKDLVMLLFETALLTSGFSLEDPNTFGTRIHRMLKLGLSIDEDESAEADADMPPLEDDAGESKMEEVD</sequence>
<reference key="1">
    <citation type="journal article" date="2005" name="Nature">
        <title>The map-based sequence of the rice genome.</title>
        <authorList>
            <consortium name="International rice genome sequencing project (IRGSP)"/>
        </authorList>
    </citation>
    <scope>NUCLEOTIDE SEQUENCE [LARGE SCALE GENOMIC DNA]</scope>
    <source>
        <strain>cv. Nipponbare</strain>
    </source>
</reference>
<reference key="2">
    <citation type="journal article" date="2013" name="Rice">
        <title>Improvement of the Oryza sativa Nipponbare reference genome using next generation sequence and optical map data.</title>
        <authorList>
            <person name="Kawahara Y."/>
            <person name="de la Bastide M."/>
            <person name="Hamilton J.P."/>
            <person name="Kanamori H."/>
            <person name="McCombie W.R."/>
            <person name="Ouyang S."/>
            <person name="Schwartz D.C."/>
            <person name="Tanaka T."/>
            <person name="Wu J."/>
            <person name="Zhou S."/>
            <person name="Childs K.L."/>
            <person name="Davidson R.M."/>
            <person name="Lin H."/>
            <person name="Quesada-Ocampo L."/>
            <person name="Vaillancourt B."/>
            <person name="Sakai H."/>
            <person name="Lee S.S."/>
            <person name="Kim J."/>
            <person name="Numa H."/>
            <person name="Itoh T."/>
            <person name="Buell C.R."/>
            <person name="Matsumoto T."/>
        </authorList>
    </citation>
    <scope>GENOME REANNOTATION</scope>
    <source>
        <strain>cv. Nipponbare</strain>
    </source>
</reference>
<reference key="3">
    <citation type="journal article" date="1992" name="Jpn. J. Genet.">
        <title>Molecular cloning and characterization of gravity specific cDNA in rice (Oryza sativa L.) suspension callus.</title>
        <authorList>
            <person name="Kwon S."/>
            <person name="Kikuchi S."/>
            <person name="Oono K."/>
        </authorList>
    </citation>
    <scope>NUCLEOTIDE SEQUENCE [MRNA] OF 161-463</scope>
    <scope>TISSUE SPECIFICITY</scope>
    <scope>INDUCTION</scope>
    <source>
        <strain>cv. Nipponbare</strain>
        <tissue>Callus</tissue>
    </source>
</reference>
<accession>Q07078</accession>
<accession>Q69QQ3</accession>
<proteinExistence type="evidence at protein level"/>